<organism>
    <name type="scientific">Bacillus velezensis (strain DSM 23117 / BGSC 10A6 / LMG 26770 / FZB42)</name>
    <name type="common">Bacillus amyloliquefaciens subsp. plantarum</name>
    <dbReference type="NCBI Taxonomy" id="326423"/>
    <lineage>
        <taxon>Bacteria</taxon>
        <taxon>Bacillati</taxon>
        <taxon>Bacillota</taxon>
        <taxon>Bacilli</taxon>
        <taxon>Bacillales</taxon>
        <taxon>Bacillaceae</taxon>
        <taxon>Bacillus</taxon>
        <taxon>Bacillus amyloliquefaciens group</taxon>
    </lineage>
</organism>
<comment type="function">
    <text evidence="1">Catalyzes the attachment of glutamate to tRNA(Glu) in a two-step reaction: glutamate is first activated by ATP to form Glu-AMP and then transferred to the acceptor end of tRNA(Glu).</text>
</comment>
<comment type="catalytic activity">
    <reaction evidence="1">
        <text>tRNA(Glu) + L-glutamate + ATP = L-glutamyl-tRNA(Glu) + AMP + diphosphate</text>
        <dbReference type="Rhea" id="RHEA:23540"/>
        <dbReference type="Rhea" id="RHEA-COMP:9663"/>
        <dbReference type="Rhea" id="RHEA-COMP:9680"/>
        <dbReference type="ChEBI" id="CHEBI:29985"/>
        <dbReference type="ChEBI" id="CHEBI:30616"/>
        <dbReference type="ChEBI" id="CHEBI:33019"/>
        <dbReference type="ChEBI" id="CHEBI:78442"/>
        <dbReference type="ChEBI" id="CHEBI:78520"/>
        <dbReference type="ChEBI" id="CHEBI:456215"/>
        <dbReference type="EC" id="6.1.1.17"/>
    </reaction>
</comment>
<comment type="subunit">
    <text evidence="1">Monomer.</text>
</comment>
<comment type="subcellular location">
    <subcellularLocation>
        <location evidence="1">Cytoplasm</location>
    </subcellularLocation>
</comment>
<comment type="similarity">
    <text evidence="1">Belongs to the class-I aminoacyl-tRNA synthetase family. Glutamate--tRNA ligase type 1 subfamily.</text>
</comment>
<sequence length="483" mass="55731">MGNEVRVRYAPSPTGHLHIGNARTALFNYLFARSQGGKFIIRIEDTDKKRNIEGGEQSQLNYLKWLGMDWDESVDIGGEYGPYRQSERNDIYKKYYEELLEKGLAYKCFCTEEELEKEREEQIARGEMPRYSGKHRNLTQEEQERFLAEGRQPSIRFRVPEGKIIAFNDIVKGEISFESDGIGDFVIVKKDGTPTYNFAVAIDDYLMKMTHVLRGEDHISNTPKQIMIFQAFGWDVPVFGHMTLIVNESRKKLSKRDESIIQFIEQYDELGYLPEALFNFIGLLGWSPVGEEELFTREQFIEIFDVNRLSKSPALFDMHKLKWVNNQYVKALDLDQVVELTLPHLQKAGKVGTELSAEEQEWVRKLISLYHEQLSYGAEIVELTDLFFKDEIEYNQEAKAVLEEEQVPEVLSVFAAKLEELEEFTPELIKASIKAVQKETGHKGKKLFMPIRVAVTGQTHGPELPQAIELIGRETAVRRLKSI</sequence>
<reference key="1">
    <citation type="journal article" date="2007" name="Nat. Biotechnol.">
        <title>Comparative analysis of the complete genome sequence of the plant growth-promoting bacterium Bacillus amyloliquefaciens FZB42.</title>
        <authorList>
            <person name="Chen X.H."/>
            <person name="Koumoutsi A."/>
            <person name="Scholz R."/>
            <person name="Eisenreich A."/>
            <person name="Schneider K."/>
            <person name="Heinemeyer I."/>
            <person name="Morgenstern B."/>
            <person name="Voss B."/>
            <person name="Hess W.R."/>
            <person name="Reva O."/>
            <person name="Junge H."/>
            <person name="Voigt B."/>
            <person name="Jungblut P.R."/>
            <person name="Vater J."/>
            <person name="Suessmuth R."/>
            <person name="Liesegang H."/>
            <person name="Strittmatter A."/>
            <person name="Gottschalk G."/>
            <person name="Borriss R."/>
        </authorList>
    </citation>
    <scope>NUCLEOTIDE SEQUENCE [LARGE SCALE GENOMIC DNA]</scope>
    <source>
        <strain>DSM 23117 / BGSC 10A6 / LMG 26770 / FZB42</strain>
    </source>
</reference>
<name>SYE_BACVZ</name>
<evidence type="ECO:0000255" key="1">
    <source>
        <dbReference type="HAMAP-Rule" id="MF_00022"/>
    </source>
</evidence>
<dbReference type="EC" id="6.1.1.17" evidence="1"/>
<dbReference type="EMBL" id="CP000560">
    <property type="protein sequence ID" value="ABS72540.1"/>
    <property type="molecule type" value="Genomic_DNA"/>
</dbReference>
<dbReference type="RefSeq" id="WP_011996189.1">
    <property type="nucleotide sequence ID" value="NC_009725.2"/>
</dbReference>
<dbReference type="SMR" id="A7Z0L4"/>
<dbReference type="GeneID" id="93079256"/>
<dbReference type="KEGG" id="bay:RBAM_001170"/>
<dbReference type="HOGENOM" id="CLU_015768_6_1_9"/>
<dbReference type="Proteomes" id="UP000001120">
    <property type="component" value="Chromosome"/>
</dbReference>
<dbReference type="GO" id="GO:0005829">
    <property type="term" value="C:cytosol"/>
    <property type="evidence" value="ECO:0007669"/>
    <property type="project" value="TreeGrafter"/>
</dbReference>
<dbReference type="GO" id="GO:0005524">
    <property type="term" value="F:ATP binding"/>
    <property type="evidence" value="ECO:0007669"/>
    <property type="project" value="UniProtKB-UniRule"/>
</dbReference>
<dbReference type="GO" id="GO:0004818">
    <property type="term" value="F:glutamate-tRNA ligase activity"/>
    <property type="evidence" value="ECO:0007669"/>
    <property type="project" value="UniProtKB-UniRule"/>
</dbReference>
<dbReference type="GO" id="GO:0000049">
    <property type="term" value="F:tRNA binding"/>
    <property type="evidence" value="ECO:0007669"/>
    <property type="project" value="InterPro"/>
</dbReference>
<dbReference type="GO" id="GO:0008270">
    <property type="term" value="F:zinc ion binding"/>
    <property type="evidence" value="ECO:0007669"/>
    <property type="project" value="InterPro"/>
</dbReference>
<dbReference type="GO" id="GO:0006424">
    <property type="term" value="P:glutamyl-tRNA aminoacylation"/>
    <property type="evidence" value="ECO:0007669"/>
    <property type="project" value="UniProtKB-UniRule"/>
</dbReference>
<dbReference type="CDD" id="cd00808">
    <property type="entry name" value="GluRS_core"/>
    <property type="match status" value="1"/>
</dbReference>
<dbReference type="FunFam" id="1.10.10.350:FF:000002">
    <property type="entry name" value="Glutamate--tRNA ligase"/>
    <property type="match status" value="1"/>
</dbReference>
<dbReference type="FunFam" id="3.40.50.620:FF:000007">
    <property type="entry name" value="Glutamate--tRNA ligase"/>
    <property type="match status" value="1"/>
</dbReference>
<dbReference type="Gene3D" id="1.10.10.350">
    <property type="match status" value="1"/>
</dbReference>
<dbReference type="Gene3D" id="3.40.50.620">
    <property type="entry name" value="HUPs"/>
    <property type="match status" value="1"/>
</dbReference>
<dbReference type="HAMAP" id="MF_00022">
    <property type="entry name" value="Glu_tRNA_synth_type1"/>
    <property type="match status" value="1"/>
</dbReference>
<dbReference type="InterPro" id="IPR045462">
    <property type="entry name" value="aa-tRNA-synth_I_cd-bd"/>
</dbReference>
<dbReference type="InterPro" id="IPR020751">
    <property type="entry name" value="aa-tRNA-synth_I_codon-bd_sub2"/>
</dbReference>
<dbReference type="InterPro" id="IPR001412">
    <property type="entry name" value="aa-tRNA-synth_I_CS"/>
</dbReference>
<dbReference type="InterPro" id="IPR008925">
    <property type="entry name" value="aa_tRNA-synth_I_cd-bd_sf"/>
</dbReference>
<dbReference type="InterPro" id="IPR004527">
    <property type="entry name" value="Glu-tRNA-ligase_bac/mito"/>
</dbReference>
<dbReference type="InterPro" id="IPR000924">
    <property type="entry name" value="Glu/Gln-tRNA-synth"/>
</dbReference>
<dbReference type="InterPro" id="IPR020058">
    <property type="entry name" value="Glu/Gln-tRNA-synth_Ib_cat-dom"/>
</dbReference>
<dbReference type="InterPro" id="IPR049940">
    <property type="entry name" value="GluQ/Sye"/>
</dbReference>
<dbReference type="InterPro" id="IPR033910">
    <property type="entry name" value="GluRS_core"/>
</dbReference>
<dbReference type="InterPro" id="IPR014729">
    <property type="entry name" value="Rossmann-like_a/b/a_fold"/>
</dbReference>
<dbReference type="NCBIfam" id="TIGR00464">
    <property type="entry name" value="gltX_bact"/>
    <property type="match status" value="1"/>
</dbReference>
<dbReference type="PANTHER" id="PTHR43311">
    <property type="entry name" value="GLUTAMATE--TRNA LIGASE"/>
    <property type="match status" value="1"/>
</dbReference>
<dbReference type="PANTHER" id="PTHR43311:SF2">
    <property type="entry name" value="GLUTAMATE--TRNA LIGASE, MITOCHONDRIAL-RELATED"/>
    <property type="match status" value="1"/>
</dbReference>
<dbReference type="Pfam" id="PF19269">
    <property type="entry name" value="Anticodon_2"/>
    <property type="match status" value="1"/>
</dbReference>
<dbReference type="Pfam" id="PF00749">
    <property type="entry name" value="tRNA-synt_1c"/>
    <property type="match status" value="1"/>
</dbReference>
<dbReference type="PRINTS" id="PR00987">
    <property type="entry name" value="TRNASYNTHGLU"/>
</dbReference>
<dbReference type="SUPFAM" id="SSF48163">
    <property type="entry name" value="An anticodon-binding domain of class I aminoacyl-tRNA synthetases"/>
    <property type="match status" value="1"/>
</dbReference>
<dbReference type="SUPFAM" id="SSF52374">
    <property type="entry name" value="Nucleotidylyl transferase"/>
    <property type="match status" value="1"/>
</dbReference>
<dbReference type="PROSITE" id="PS00178">
    <property type="entry name" value="AA_TRNA_LIGASE_I"/>
    <property type="match status" value="1"/>
</dbReference>
<accession>A7Z0L4</accession>
<feature type="chain" id="PRO_1000001871" description="Glutamate--tRNA ligase">
    <location>
        <begin position="1"/>
        <end position="483"/>
    </location>
</feature>
<feature type="short sequence motif" description="'HIGH' region" evidence="1">
    <location>
        <begin position="11"/>
        <end position="21"/>
    </location>
</feature>
<feature type="short sequence motif" description="'KMSKS' region" evidence="1">
    <location>
        <begin position="252"/>
        <end position="256"/>
    </location>
</feature>
<feature type="binding site" evidence="1">
    <location>
        <position position="255"/>
    </location>
    <ligand>
        <name>ATP</name>
        <dbReference type="ChEBI" id="CHEBI:30616"/>
    </ligand>
</feature>
<gene>
    <name evidence="1" type="primary">gltX</name>
    <name type="ordered locus">RBAM_001170</name>
</gene>
<keyword id="KW-0030">Aminoacyl-tRNA synthetase</keyword>
<keyword id="KW-0067">ATP-binding</keyword>
<keyword id="KW-0963">Cytoplasm</keyword>
<keyword id="KW-0436">Ligase</keyword>
<keyword id="KW-0547">Nucleotide-binding</keyword>
<keyword id="KW-0648">Protein biosynthesis</keyword>
<protein>
    <recommendedName>
        <fullName evidence="1">Glutamate--tRNA ligase</fullName>
        <ecNumber evidence="1">6.1.1.17</ecNumber>
    </recommendedName>
    <alternativeName>
        <fullName evidence="1">Glutamyl-tRNA synthetase</fullName>
        <shortName evidence="1">GluRS</shortName>
    </alternativeName>
</protein>
<proteinExistence type="inferred from homology"/>